<gene>
    <name evidence="1" type="primary">djlA</name>
    <name type="ordered locus">plu0613</name>
</gene>
<feature type="chain" id="PRO_0000209433" description="Co-chaperone protein DjlA">
    <location>
        <begin position="1"/>
        <end position="273"/>
    </location>
</feature>
<feature type="topological domain" description="Periplasmic" evidence="1">
    <location>
        <begin position="1"/>
        <end position="6"/>
    </location>
</feature>
<feature type="transmembrane region" description="Helical" evidence="1">
    <location>
        <begin position="7"/>
        <end position="31"/>
    </location>
</feature>
<feature type="topological domain" description="Cytoplasmic" evidence="1">
    <location>
        <begin position="32"/>
        <end position="273"/>
    </location>
</feature>
<feature type="domain" description="J" evidence="1">
    <location>
        <begin position="207"/>
        <end position="273"/>
    </location>
</feature>
<accession>Q7N8V3</accession>
<reference key="1">
    <citation type="journal article" date="2003" name="Nat. Biotechnol.">
        <title>The genome sequence of the entomopathogenic bacterium Photorhabdus luminescens.</title>
        <authorList>
            <person name="Duchaud E."/>
            <person name="Rusniok C."/>
            <person name="Frangeul L."/>
            <person name="Buchrieser C."/>
            <person name="Givaudan A."/>
            <person name="Taourit S."/>
            <person name="Bocs S."/>
            <person name="Boursaux-Eude C."/>
            <person name="Chandler M."/>
            <person name="Charles J.-F."/>
            <person name="Dassa E."/>
            <person name="Derose R."/>
            <person name="Derzelle S."/>
            <person name="Freyssinet G."/>
            <person name="Gaudriault S."/>
            <person name="Medigue C."/>
            <person name="Lanois A."/>
            <person name="Powell K."/>
            <person name="Siguier P."/>
            <person name="Vincent R."/>
            <person name="Wingate V."/>
            <person name="Zouine M."/>
            <person name="Glaser P."/>
            <person name="Boemare N."/>
            <person name="Danchin A."/>
            <person name="Kunst F."/>
        </authorList>
    </citation>
    <scope>NUCLEOTIDE SEQUENCE [LARGE SCALE GENOMIC DNA]</scope>
    <source>
        <strain>DSM 15139 / CIP 105565 / TT01</strain>
    </source>
</reference>
<name>DJLA_PHOLL</name>
<dbReference type="EMBL" id="BX571860">
    <property type="protein sequence ID" value="CAE12908.1"/>
    <property type="molecule type" value="Genomic_DNA"/>
</dbReference>
<dbReference type="RefSeq" id="WP_011144990.1">
    <property type="nucleotide sequence ID" value="NC_005126.1"/>
</dbReference>
<dbReference type="SMR" id="Q7N8V3"/>
<dbReference type="STRING" id="243265.plu0613"/>
<dbReference type="GeneID" id="48846900"/>
<dbReference type="KEGG" id="plu:plu0613"/>
<dbReference type="eggNOG" id="COG1076">
    <property type="taxonomic scope" value="Bacteria"/>
</dbReference>
<dbReference type="HOGENOM" id="CLU_066221_1_0_6"/>
<dbReference type="OrthoDB" id="9782583at2"/>
<dbReference type="Proteomes" id="UP000002514">
    <property type="component" value="Chromosome"/>
</dbReference>
<dbReference type="GO" id="GO:0005886">
    <property type="term" value="C:plasma membrane"/>
    <property type="evidence" value="ECO:0007669"/>
    <property type="project" value="UniProtKB-SubCell"/>
</dbReference>
<dbReference type="GO" id="GO:0051087">
    <property type="term" value="F:protein-folding chaperone binding"/>
    <property type="evidence" value="ECO:0007669"/>
    <property type="project" value="InterPro"/>
</dbReference>
<dbReference type="CDD" id="cd06257">
    <property type="entry name" value="DnaJ"/>
    <property type="match status" value="1"/>
</dbReference>
<dbReference type="CDD" id="cd07316">
    <property type="entry name" value="terB_like_DjlA"/>
    <property type="match status" value="1"/>
</dbReference>
<dbReference type="FunFam" id="1.10.287.110:FF:000011">
    <property type="entry name" value="Co-chaperone protein DjlA"/>
    <property type="match status" value="1"/>
</dbReference>
<dbReference type="FunFam" id="1.10.3680.10:FF:000001">
    <property type="entry name" value="Co-chaperone protein DjlA"/>
    <property type="match status" value="1"/>
</dbReference>
<dbReference type="Gene3D" id="1.10.287.110">
    <property type="entry name" value="DnaJ domain"/>
    <property type="match status" value="1"/>
</dbReference>
<dbReference type="Gene3D" id="1.10.3680.10">
    <property type="entry name" value="TerB-like"/>
    <property type="match status" value="1"/>
</dbReference>
<dbReference type="HAMAP" id="MF_01153">
    <property type="entry name" value="DjlA"/>
    <property type="match status" value="1"/>
</dbReference>
<dbReference type="InterPro" id="IPR023749">
    <property type="entry name" value="DjlA"/>
</dbReference>
<dbReference type="InterPro" id="IPR050817">
    <property type="entry name" value="DjlA_DnaK_co-chaperone"/>
</dbReference>
<dbReference type="InterPro" id="IPR007791">
    <property type="entry name" value="DjlA_N"/>
</dbReference>
<dbReference type="InterPro" id="IPR001623">
    <property type="entry name" value="DnaJ_domain"/>
</dbReference>
<dbReference type="InterPro" id="IPR036869">
    <property type="entry name" value="J_dom_sf"/>
</dbReference>
<dbReference type="InterPro" id="IPR029024">
    <property type="entry name" value="TerB-like"/>
</dbReference>
<dbReference type="NCBIfam" id="NF006948">
    <property type="entry name" value="PRK09430.1"/>
    <property type="match status" value="1"/>
</dbReference>
<dbReference type="PANTHER" id="PTHR24074">
    <property type="entry name" value="CO-CHAPERONE PROTEIN DJLA"/>
    <property type="match status" value="1"/>
</dbReference>
<dbReference type="Pfam" id="PF00226">
    <property type="entry name" value="DnaJ"/>
    <property type="match status" value="1"/>
</dbReference>
<dbReference type="Pfam" id="PF05099">
    <property type="entry name" value="TerB"/>
    <property type="match status" value="1"/>
</dbReference>
<dbReference type="PRINTS" id="PR00625">
    <property type="entry name" value="JDOMAIN"/>
</dbReference>
<dbReference type="SMART" id="SM00271">
    <property type="entry name" value="DnaJ"/>
    <property type="match status" value="1"/>
</dbReference>
<dbReference type="SUPFAM" id="SSF46565">
    <property type="entry name" value="Chaperone J-domain"/>
    <property type="match status" value="1"/>
</dbReference>
<dbReference type="PROSITE" id="PS50076">
    <property type="entry name" value="DNAJ_2"/>
    <property type="match status" value="1"/>
</dbReference>
<comment type="function">
    <text evidence="1">Regulatory DnaK co-chaperone. Direct interaction between DnaK and DjlA is needed for the induction of the wcaABCDE operon, involved in the synthesis of a colanic acid polysaccharide capsule, possibly through activation of the RcsB/RcsC phosphotransfer signaling pathway. The colanic acid capsule may help the bacterium survive conditions outside the host.</text>
</comment>
<comment type="subunit">
    <text evidence="1">Homodimer.</text>
</comment>
<comment type="subcellular location">
    <subcellularLocation>
        <location evidence="1">Cell inner membrane</location>
        <topology evidence="1">Single-pass type III membrane protein</topology>
    </subcellularLocation>
</comment>
<comment type="domain">
    <text evidence="1">The transmembrane domain is a dimerization domain.</text>
</comment>
<evidence type="ECO:0000255" key="1">
    <source>
        <dbReference type="HAMAP-Rule" id="MF_01153"/>
    </source>
</evidence>
<organism>
    <name type="scientific">Photorhabdus laumondii subsp. laumondii (strain DSM 15139 / CIP 105565 / TT01)</name>
    <name type="common">Photorhabdus luminescens subsp. laumondii</name>
    <dbReference type="NCBI Taxonomy" id="243265"/>
    <lineage>
        <taxon>Bacteria</taxon>
        <taxon>Pseudomonadati</taxon>
        <taxon>Pseudomonadota</taxon>
        <taxon>Gammaproteobacteria</taxon>
        <taxon>Enterobacterales</taxon>
        <taxon>Morganellaceae</taxon>
        <taxon>Photorhabdus</taxon>
    </lineage>
</organism>
<sequence length="273" mass="30898">MHYWGKLLGLIFGVVSGAGFWGIVIGLFIGHMLDRASVRGNQGFFANNQSRQLLFFSSTFQVMGHITKSKGRVTETDIRLASQLMERMQLHGQARIAAQQAFREGKEPNFPLRETLRQLRRACFGRSDLIRMFLEIQLQAAFSDGQLHPNERTVLFIIADELGISRNQFEQFLAMMEGGRNFGDGGEWQQRQYGGYQKAAQGPTLADACKVLGVREKDDATTIKRAYRRLMSEHHPDKLVAKGLPPEMMEIAKQKAQSIQAAYDLIKKEKGFK</sequence>
<keyword id="KW-0997">Cell inner membrane</keyword>
<keyword id="KW-1003">Cell membrane</keyword>
<keyword id="KW-0143">Chaperone</keyword>
<keyword id="KW-0472">Membrane</keyword>
<keyword id="KW-1185">Reference proteome</keyword>
<keyword id="KW-0812">Transmembrane</keyword>
<keyword id="KW-1133">Transmembrane helix</keyword>
<proteinExistence type="inferred from homology"/>
<protein>
    <recommendedName>
        <fullName evidence="1">Co-chaperone protein DjlA</fullName>
    </recommendedName>
</protein>